<organism>
    <name type="scientific">Diplobatis ommata</name>
    <name type="common">Ocellated electric ray</name>
    <name type="synonym">Discopyge ommata</name>
    <dbReference type="NCBI Taxonomy" id="1870830"/>
    <lineage>
        <taxon>Eukaryota</taxon>
        <taxon>Metazoa</taxon>
        <taxon>Chordata</taxon>
        <taxon>Craniata</taxon>
        <taxon>Vertebrata</taxon>
        <taxon>Chondrichthyes</taxon>
        <taxon>Elasmobranchii</taxon>
        <taxon>Batoidea</taxon>
        <taxon>Torpediniformes</taxon>
        <taxon>Narcinidae</taxon>
        <taxon>Diplobatis</taxon>
    </lineage>
</organism>
<protein>
    <recommendedName>
        <fullName>Agrin</fullName>
    </recommendedName>
</protein>
<evidence type="ECO:0000250" key="1"/>
<evidence type="ECO:0000250" key="2">
    <source>
        <dbReference type="UniProtKB" id="P31696"/>
    </source>
</evidence>
<evidence type="ECO:0000255" key="3"/>
<evidence type="ECO:0000255" key="4">
    <source>
        <dbReference type="PROSITE-ProRule" id="PRU00076"/>
    </source>
</evidence>
<evidence type="ECO:0000255" key="5">
    <source>
        <dbReference type="PROSITE-ProRule" id="PRU00122"/>
    </source>
</evidence>
<evidence type="ECO:0000255" key="6">
    <source>
        <dbReference type="PROSITE-ProRule" id="PRU00188"/>
    </source>
</evidence>
<evidence type="ECO:0000255" key="7">
    <source>
        <dbReference type="PROSITE-ProRule" id="PRU00460"/>
    </source>
</evidence>
<evidence type="ECO:0000255" key="8">
    <source>
        <dbReference type="PROSITE-ProRule" id="PRU00798"/>
    </source>
</evidence>
<evidence type="ECO:0000256" key="9">
    <source>
        <dbReference type="SAM" id="MobiDB-lite"/>
    </source>
</evidence>
<reference key="1">
    <citation type="journal article" date="1992" name="Mol. Cell. Neurosci.">
        <title>Isolation and characterization of a cDNA that encodes an agrin homolog in the marine ray.</title>
        <authorList>
            <person name="Smith M.A."/>
            <person name="Magill-Solc C."/>
            <person name="Rupp F."/>
            <person name="Yao Y.-M.M."/>
            <person name="Schilling J.W."/>
            <person name="Snow P."/>
            <person name="McMahan U.J."/>
        </authorList>
    </citation>
    <scope>NUCLEOTIDE SEQUENCE [MRNA]</scope>
</reference>
<keyword id="KW-0217">Developmental protein</keyword>
<keyword id="KW-0221">Differentiation</keyword>
<keyword id="KW-1015">Disulfide bond</keyword>
<keyword id="KW-0245">EGF-like domain</keyword>
<keyword id="KW-0325">Glycoprotein</keyword>
<keyword id="KW-0424">Laminin EGF-like domain</keyword>
<keyword id="KW-0677">Repeat</keyword>
<gene>
    <name type="primary">AGRN</name>
    <name type="synonym">AGRIN</name>
</gene>
<proteinExistence type="evidence at transcript level"/>
<dbReference type="EMBL" id="L01423">
    <property type="protein sequence ID" value="AAA49224.1"/>
    <property type="molecule type" value="mRNA"/>
</dbReference>
<dbReference type="PIR" id="T43060">
    <property type="entry name" value="T43060"/>
</dbReference>
<dbReference type="SMR" id="Q90404"/>
<dbReference type="GlyCosmos" id="Q90404">
    <property type="glycosylation" value="5 sites, No reported glycans"/>
</dbReference>
<dbReference type="GO" id="GO:0005604">
    <property type="term" value="C:basement membrane"/>
    <property type="evidence" value="ECO:0007669"/>
    <property type="project" value="UniProtKB-ARBA"/>
</dbReference>
<dbReference type="GO" id="GO:0005576">
    <property type="term" value="C:extracellular region"/>
    <property type="evidence" value="ECO:0007669"/>
    <property type="project" value="UniProtKB-ARBA"/>
</dbReference>
<dbReference type="GO" id="GO:0005509">
    <property type="term" value="F:calcium ion binding"/>
    <property type="evidence" value="ECO:0007669"/>
    <property type="project" value="InterPro"/>
</dbReference>
<dbReference type="GO" id="GO:0030154">
    <property type="term" value="P:cell differentiation"/>
    <property type="evidence" value="ECO:0007669"/>
    <property type="project" value="UniProtKB-KW"/>
</dbReference>
<dbReference type="CDD" id="cd00054">
    <property type="entry name" value="EGF_CA"/>
    <property type="match status" value="2"/>
</dbReference>
<dbReference type="CDD" id="cd00055">
    <property type="entry name" value="EGF_Lam"/>
    <property type="match status" value="2"/>
</dbReference>
<dbReference type="CDD" id="cd00104">
    <property type="entry name" value="KAZAL_FS"/>
    <property type="match status" value="2"/>
</dbReference>
<dbReference type="CDD" id="cd00110">
    <property type="entry name" value="LamG"/>
    <property type="match status" value="3"/>
</dbReference>
<dbReference type="FunFam" id="2.10.25.10:FF:000770">
    <property type="entry name" value="Agrin"/>
    <property type="match status" value="1"/>
</dbReference>
<dbReference type="FunFam" id="2.60.120.200:FF:000031">
    <property type="entry name" value="NtA agrin"/>
    <property type="match status" value="1"/>
</dbReference>
<dbReference type="FunFam" id="2.10.25.10:FF:000134">
    <property type="entry name" value="Transmembrane agrin"/>
    <property type="match status" value="1"/>
</dbReference>
<dbReference type="FunFam" id="2.10.25.10:FF:000140">
    <property type="entry name" value="Transmembrane agrin"/>
    <property type="match status" value="1"/>
</dbReference>
<dbReference type="FunFam" id="2.60.120.200:FF:000027">
    <property type="entry name" value="Transmembrane agrin"/>
    <property type="match status" value="1"/>
</dbReference>
<dbReference type="FunFam" id="3.30.60.30:FF:000024">
    <property type="entry name" value="Transmembrane agrin"/>
    <property type="match status" value="1"/>
</dbReference>
<dbReference type="Gene3D" id="2.60.120.200">
    <property type="match status" value="3"/>
</dbReference>
<dbReference type="Gene3D" id="3.30.60.30">
    <property type="match status" value="2"/>
</dbReference>
<dbReference type="Gene3D" id="2.10.25.10">
    <property type="entry name" value="Laminin"/>
    <property type="match status" value="6"/>
</dbReference>
<dbReference type="Gene3D" id="3.30.70.960">
    <property type="entry name" value="SEA domain"/>
    <property type="match status" value="1"/>
</dbReference>
<dbReference type="InterPro" id="IPR013320">
    <property type="entry name" value="ConA-like_dom_sf"/>
</dbReference>
<dbReference type="InterPro" id="IPR001881">
    <property type="entry name" value="EGF-like_Ca-bd_dom"/>
</dbReference>
<dbReference type="InterPro" id="IPR000742">
    <property type="entry name" value="EGF-like_dom"/>
</dbReference>
<dbReference type="InterPro" id="IPR000152">
    <property type="entry name" value="EGF-type_Asp/Asn_hydroxyl_site"/>
</dbReference>
<dbReference type="InterPro" id="IPR003884">
    <property type="entry name" value="FacI_MAC"/>
</dbReference>
<dbReference type="InterPro" id="IPR003645">
    <property type="entry name" value="Fol_N"/>
</dbReference>
<dbReference type="InterPro" id="IPR002350">
    <property type="entry name" value="Kazal_dom"/>
</dbReference>
<dbReference type="InterPro" id="IPR036058">
    <property type="entry name" value="Kazal_dom_sf"/>
</dbReference>
<dbReference type="InterPro" id="IPR001791">
    <property type="entry name" value="Laminin_G"/>
</dbReference>
<dbReference type="InterPro" id="IPR002049">
    <property type="entry name" value="LE_dom"/>
</dbReference>
<dbReference type="InterPro" id="IPR050372">
    <property type="entry name" value="Neurexin-related_CASP"/>
</dbReference>
<dbReference type="InterPro" id="IPR000082">
    <property type="entry name" value="SEA_dom"/>
</dbReference>
<dbReference type="InterPro" id="IPR036364">
    <property type="entry name" value="SEA_dom_sf"/>
</dbReference>
<dbReference type="PANTHER" id="PTHR15036:SF83">
    <property type="entry name" value="AGRIN"/>
    <property type="match status" value="1"/>
</dbReference>
<dbReference type="PANTHER" id="PTHR15036">
    <property type="entry name" value="PIKACHURIN-LIKE PROTEIN"/>
    <property type="match status" value="1"/>
</dbReference>
<dbReference type="Pfam" id="PF00008">
    <property type="entry name" value="EGF"/>
    <property type="match status" value="1"/>
</dbReference>
<dbReference type="Pfam" id="PF00053">
    <property type="entry name" value="EGF_laminin"/>
    <property type="match status" value="2"/>
</dbReference>
<dbReference type="Pfam" id="PF07648">
    <property type="entry name" value="Kazal_2"/>
    <property type="match status" value="2"/>
</dbReference>
<dbReference type="Pfam" id="PF00054">
    <property type="entry name" value="Laminin_G_1"/>
    <property type="match status" value="3"/>
</dbReference>
<dbReference type="Pfam" id="PF01390">
    <property type="entry name" value="SEA"/>
    <property type="match status" value="1"/>
</dbReference>
<dbReference type="PRINTS" id="PR00011">
    <property type="entry name" value="EGFLAMININ"/>
</dbReference>
<dbReference type="SMART" id="SM00181">
    <property type="entry name" value="EGF"/>
    <property type="match status" value="6"/>
</dbReference>
<dbReference type="SMART" id="SM00179">
    <property type="entry name" value="EGF_CA"/>
    <property type="match status" value="2"/>
</dbReference>
<dbReference type="SMART" id="SM00180">
    <property type="entry name" value="EGF_Lam"/>
    <property type="match status" value="2"/>
</dbReference>
<dbReference type="SMART" id="SM00057">
    <property type="entry name" value="FIMAC"/>
    <property type="match status" value="1"/>
</dbReference>
<dbReference type="SMART" id="SM00274">
    <property type="entry name" value="FOLN"/>
    <property type="match status" value="2"/>
</dbReference>
<dbReference type="SMART" id="SM00280">
    <property type="entry name" value="KAZAL"/>
    <property type="match status" value="2"/>
</dbReference>
<dbReference type="SMART" id="SM00282">
    <property type="entry name" value="LamG"/>
    <property type="match status" value="3"/>
</dbReference>
<dbReference type="SMART" id="SM00200">
    <property type="entry name" value="SEA"/>
    <property type="match status" value="1"/>
</dbReference>
<dbReference type="SUPFAM" id="SSF49899">
    <property type="entry name" value="Concanavalin A-like lectins/glucanases"/>
    <property type="match status" value="3"/>
</dbReference>
<dbReference type="SUPFAM" id="SSF57196">
    <property type="entry name" value="EGF/Laminin"/>
    <property type="match status" value="1"/>
</dbReference>
<dbReference type="SUPFAM" id="SSF100895">
    <property type="entry name" value="Kazal-type serine protease inhibitors"/>
    <property type="match status" value="2"/>
</dbReference>
<dbReference type="SUPFAM" id="SSF82671">
    <property type="entry name" value="SEA domain"/>
    <property type="match status" value="1"/>
</dbReference>
<dbReference type="PROSITE" id="PS00010">
    <property type="entry name" value="ASX_HYDROXYL"/>
    <property type="match status" value="1"/>
</dbReference>
<dbReference type="PROSITE" id="PS00022">
    <property type="entry name" value="EGF_1"/>
    <property type="match status" value="5"/>
</dbReference>
<dbReference type="PROSITE" id="PS01186">
    <property type="entry name" value="EGF_2"/>
    <property type="match status" value="1"/>
</dbReference>
<dbReference type="PROSITE" id="PS50026">
    <property type="entry name" value="EGF_3"/>
    <property type="match status" value="4"/>
</dbReference>
<dbReference type="PROSITE" id="PS01248">
    <property type="entry name" value="EGF_LAM_1"/>
    <property type="match status" value="1"/>
</dbReference>
<dbReference type="PROSITE" id="PS50027">
    <property type="entry name" value="EGF_LAM_2"/>
    <property type="match status" value="2"/>
</dbReference>
<dbReference type="PROSITE" id="PS51465">
    <property type="entry name" value="KAZAL_2"/>
    <property type="match status" value="2"/>
</dbReference>
<dbReference type="PROSITE" id="PS50025">
    <property type="entry name" value="LAM_G_DOMAIN"/>
    <property type="match status" value="3"/>
</dbReference>
<dbReference type="PROSITE" id="PS50024">
    <property type="entry name" value="SEA"/>
    <property type="match status" value="1"/>
</dbReference>
<comment type="function">
    <text evidence="1">Plays a central role in the formation and the maintenance of the neuromuscular junction (NMJ), the synapse between motor neuron and skeletal muscle. Ligand of the MUSK signaling complex that induces the phosphorylation of MUSK, the kinase of the complex. The activation of MUSK in myotubes induces the formation of NMJ by regulating different processes including the transcription of specific genes and the clustering of AChR in the postsynaptic membrane (By similarity).</text>
</comment>
<comment type="subcellular location">
    <text evidence="2">Synaptic basal lamina at the neuromuscular junction.</text>
</comment>
<feature type="chain" id="PRO_0000055625" description="Agrin">
    <location>
        <begin position="1" status="less than"/>
        <end position="1328"/>
    </location>
</feature>
<feature type="domain" description="Kazal-like 1" evidence="8">
    <location>
        <begin position="1" status="less than"/>
        <end position="41"/>
    </location>
</feature>
<feature type="domain" description="Laminin EGF-like 1" evidence="7">
    <location>
        <begin position="79"/>
        <end position="132"/>
    </location>
</feature>
<feature type="domain" description="Laminin EGF-like 2" evidence="7">
    <location>
        <begin position="133"/>
        <end position="179"/>
    </location>
</feature>
<feature type="domain" description="Kazal-like 2" evidence="8">
    <location>
        <begin position="201"/>
        <end position="257"/>
    </location>
</feature>
<feature type="domain" description="SEA" evidence="6">
    <location>
        <begin position="411"/>
        <end position="533"/>
    </location>
</feature>
<feature type="domain" description="EGF-like 1" evidence="4">
    <location>
        <begin position="608"/>
        <end position="644"/>
    </location>
</feature>
<feature type="domain" description="Laminin G-like 1" evidence="5">
    <location>
        <begin position="649"/>
        <end position="825"/>
    </location>
</feature>
<feature type="domain" description="EGF-like 2" evidence="4">
    <location>
        <begin position="865"/>
        <end position="902"/>
    </location>
</feature>
<feature type="domain" description="Laminin G-like 2" evidence="5">
    <location>
        <begin position="914"/>
        <end position="1096"/>
    </location>
</feature>
<feature type="domain" description="EGF-like 3" evidence="4">
    <location>
        <begin position="1097"/>
        <end position="1135"/>
    </location>
</feature>
<feature type="domain" description="Laminin G-like 3" evidence="5">
    <location>
        <begin position="1146"/>
        <end position="1324"/>
    </location>
</feature>
<feature type="region of interest" description="Disordered" evidence="9">
    <location>
        <begin position="322"/>
        <end position="384"/>
    </location>
</feature>
<feature type="glycosylation site" description="N-linked (GlcNAc...) asparagine" evidence="3">
    <location>
        <position position="63"/>
    </location>
</feature>
<feature type="glycosylation site" description="N-linked (GlcNAc...) asparagine" evidence="3">
    <location>
        <position position="168"/>
    </location>
</feature>
<feature type="glycosylation site" description="N-linked (GlcNAc...) asparagine" evidence="3">
    <location>
        <position position="279"/>
    </location>
</feature>
<feature type="glycosylation site" description="N-linked (GlcNAc...) asparagine" evidence="3">
    <location>
        <position position="301"/>
    </location>
</feature>
<feature type="glycosylation site" description="N-linked (GlcNAc...) asparagine" evidence="3">
    <location>
        <position position="369"/>
    </location>
</feature>
<feature type="disulfide bond" evidence="8">
    <location>
        <begin position="7"/>
        <end position="39"/>
    </location>
</feature>
<feature type="disulfide bond" evidence="1">
    <location>
        <begin position="79"/>
        <end position="91"/>
    </location>
</feature>
<feature type="disulfide bond" evidence="1">
    <location>
        <begin position="81"/>
        <end position="98"/>
    </location>
</feature>
<feature type="disulfide bond" evidence="1">
    <location>
        <begin position="100"/>
        <end position="109"/>
    </location>
</feature>
<feature type="disulfide bond" evidence="1">
    <location>
        <begin position="112"/>
        <end position="130"/>
    </location>
</feature>
<feature type="disulfide bond" evidence="1">
    <location>
        <begin position="133"/>
        <end position="145"/>
    </location>
</feature>
<feature type="disulfide bond" evidence="1">
    <location>
        <begin position="135"/>
        <end position="152"/>
    </location>
</feature>
<feature type="disulfide bond" evidence="1">
    <location>
        <begin position="154"/>
        <end position="163"/>
    </location>
</feature>
<feature type="disulfide bond" evidence="1">
    <location>
        <begin position="166"/>
        <end position="177"/>
    </location>
</feature>
<feature type="disulfide bond" evidence="8">
    <location>
        <begin position="207"/>
        <end position="241"/>
    </location>
</feature>
<feature type="disulfide bond" evidence="8">
    <location>
        <begin position="214"/>
        <end position="234"/>
    </location>
</feature>
<feature type="disulfide bond" evidence="8">
    <location>
        <begin position="223"/>
        <end position="255"/>
    </location>
</feature>
<feature type="disulfide bond" evidence="1">
    <location>
        <begin position="612"/>
        <end position="623"/>
    </location>
</feature>
<feature type="disulfide bond" evidence="1">
    <location>
        <begin position="617"/>
        <end position="632"/>
    </location>
</feature>
<feature type="disulfide bond" evidence="1">
    <location>
        <begin position="634"/>
        <end position="643"/>
    </location>
</feature>
<feature type="disulfide bond" evidence="1">
    <location>
        <begin position="796"/>
        <end position="825"/>
    </location>
</feature>
<feature type="disulfide bond" evidence="1">
    <location>
        <begin position="830"/>
        <end position="841"/>
    </location>
</feature>
<feature type="disulfide bond" evidence="1">
    <location>
        <begin position="835"/>
        <end position="851"/>
    </location>
</feature>
<feature type="disulfide bond" evidence="1">
    <location>
        <begin position="869"/>
        <end position="880"/>
    </location>
</feature>
<feature type="disulfide bond" evidence="1">
    <location>
        <begin position="874"/>
        <end position="890"/>
    </location>
</feature>
<feature type="disulfide bond" evidence="1">
    <location>
        <begin position="892"/>
        <end position="901"/>
    </location>
</feature>
<feature type="disulfide bond" evidence="1">
    <location>
        <begin position="1101"/>
        <end position="1114"/>
    </location>
</feature>
<feature type="disulfide bond" evidence="1">
    <location>
        <begin position="1108"/>
        <end position="1123"/>
    </location>
</feature>
<feature type="disulfide bond" evidence="1">
    <location>
        <begin position="1125"/>
        <end position="1134"/>
    </location>
</feature>
<feature type="disulfide bond" evidence="1">
    <location>
        <begin position="1298"/>
        <end position="1324"/>
    </location>
</feature>
<feature type="non-terminal residue">
    <location>
        <position position="1"/>
    </location>
</feature>
<accession>Q90404</accession>
<name>AGRIN_DIPOM</name>
<sequence length="1328" mass="144018">VPLSPVCGSDGVTYDSECALKLMRCMIQKDLHVVMLSPCKDASPSSVPELHCSRSVYGCCRDNVTAAQGVGLAGCPSTCECNRYGSYSKTCSPSSGQCSCKPGVGGLKCDRCEPGFWNFRGIVTDEKSGCTPCNCYPLGAVRDDCEQMSGLCSCKAGISGMKCNQCPNGSKLGPSGCDQDPSVSRTCSDLHCQYGATCVQSIGRAYCECPPSICPKNKQFKVCGSDGVTYANECQLKTIACRQGSVINILHQGPCQGTTPSTGNIQTTDLTPSPKEHTNLSKIVSLETIPILKAIFPVTDNTTGPQVHKMYTVTASPGVIGHPTAGWPPSSLTSSEPPDLSGSGDFSGDTDLEASGNLEGSGVEPMGFNESSTGPPTPVPNERSTCDNTEFGCCSDGKTPSVDGEGSNCPPTKLFQGVLIVEEVEGQELFYTPEMDDPKSELFGETARSIENALNELFGNSNVKKDFKSVRVHGLGPSDPVRIIVEVHFDPRTSYNSHDVQRALLQQVKQSRRKSIVVKKPEQDNVKIVDFDWAPLLFTTTSTTAARTTVPITTASALPVTRRPPPATTRWPKVLPHAKVPSTTTKPATTRRPPFSRKVEVRPATVKVHRPCDSQPCLHGGTCEDDGVSYTCSCPAGRGGAVCERTIVYFIPEFGGRSYLAFKTMKAYYTVRISMEFRASNLDGLPLVQWTEKGKGLHFYRPSEGYVELRFNHGVWDGVITSKTLIKPGNWHHVVGNRNRRSGMLSVDGEPHLIGESPPGTDGLNLDTDLFLGGTPEDEMTLVTERTTATKGLQGCIRLLDVNNLIYDLQERSNDVLYGSGVGECGNNPCSPNPCKNRGKCHMKEAEMFHCESVGEFSGPTCADKHNPCDPNPCHQSANCMVLPEGGSKCECPMGREGELCERVSEAEQDQGKAFIPEFNGLSYLEMNGIHTFVSDLLQKLSMEVIFLAKDPNGMIFYNGQKTDGRGDFVSLNLRDGYLEFKYDLGKGAAVLRSKAPIPLNVWNVVTVERNGRKGLMKINKDELVSGESPKSRKAPHTALNLKEAFYVGGAPDFNKFARAAGIISGFTGAIQKLSLKSIPLLKKENIRNAMEISNFRWHACTKTRNPCQNGGVCSPRLREYDCMCQRGFSGPQCEKALEEKSASGSESVAFNGRTFIEYHNTVTRSEKAVQVNYFEMSIKTEATKGLILWSGKIAEKSDYIALAVVDGFVQMTYDLGSKPVTLRSTIPVNTNQWVRIKANRIHGYGTLQVGNEAPVTGSSPFAATQLDTDGALWLGGIEKLAPGNRLPKAYSTGFIGCIKDVVIDRQELQLVEDALNNPTILHCPAKK</sequence>